<dbReference type="EMBL" id="AF085279">
    <property type="protein sequence ID" value="AAD25931.1"/>
    <property type="status" value="ALT_SEQ"/>
    <property type="molecule type" value="Genomic_DNA"/>
</dbReference>
<dbReference type="EMBL" id="CP002685">
    <property type="protein sequence ID" value="AEC09789.1"/>
    <property type="molecule type" value="Genomic_DNA"/>
</dbReference>
<dbReference type="EMBL" id="AF370500">
    <property type="protein sequence ID" value="AAK43877.1"/>
    <property type="molecule type" value="mRNA"/>
</dbReference>
<dbReference type="EMBL" id="BT003422">
    <property type="protein sequence ID" value="AAO30085.1"/>
    <property type="molecule type" value="mRNA"/>
</dbReference>
<dbReference type="PIR" id="H84825">
    <property type="entry name" value="H84825"/>
</dbReference>
<dbReference type="RefSeq" id="NP_030560.1">
    <property type="nucleotide sequence ID" value="NM_129573.2"/>
</dbReference>
<dbReference type="SMR" id="Q94K00"/>
<dbReference type="STRING" id="3702.Q94K00"/>
<dbReference type="PaxDb" id="3702-AT2G40150.1"/>
<dbReference type="ProteomicsDB" id="246454"/>
<dbReference type="EnsemblPlants" id="AT2G40150.1">
    <property type="protein sequence ID" value="AT2G40150.1"/>
    <property type="gene ID" value="AT2G40150"/>
</dbReference>
<dbReference type="GeneID" id="818606"/>
<dbReference type="Gramene" id="AT2G40150.1">
    <property type="protein sequence ID" value="AT2G40150.1"/>
    <property type="gene ID" value="AT2G40150"/>
</dbReference>
<dbReference type="KEGG" id="ath:AT2G40150"/>
<dbReference type="Araport" id="AT2G40150"/>
<dbReference type="TAIR" id="AT2G40150">
    <property type="gene designation" value="TBL28"/>
</dbReference>
<dbReference type="eggNOG" id="ENOG502QUBK">
    <property type="taxonomic scope" value="Eukaryota"/>
</dbReference>
<dbReference type="HOGENOM" id="CLU_020953_3_1_1"/>
<dbReference type="InParanoid" id="Q94K00"/>
<dbReference type="OMA" id="CAMETMP"/>
<dbReference type="PhylomeDB" id="Q94K00"/>
<dbReference type="PRO" id="PR:Q94K00"/>
<dbReference type="Proteomes" id="UP000006548">
    <property type="component" value="Chromosome 2"/>
</dbReference>
<dbReference type="ExpressionAtlas" id="Q94K00">
    <property type="expression patterns" value="baseline and differential"/>
</dbReference>
<dbReference type="GO" id="GO:0016020">
    <property type="term" value="C:membrane"/>
    <property type="evidence" value="ECO:0007669"/>
    <property type="project" value="UniProtKB-SubCell"/>
</dbReference>
<dbReference type="GO" id="GO:0016413">
    <property type="term" value="F:O-acetyltransferase activity"/>
    <property type="evidence" value="ECO:0007669"/>
    <property type="project" value="InterPro"/>
</dbReference>
<dbReference type="InterPro" id="IPR029962">
    <property type="entry name" value="TBL"/>
</dbReference>
<dbReference type="InterPro" id="IPR026057">
    <property type="entry name" value="TBL_C"/>
</dbReference>
<dbReference type="InterPro" id="IPR025846">
    <property type="entry name" value="TBL_N"/>
</dbReference>
<dbReference type="PANTHER" id="PTHR32285:SF227">
    <property type="entry name" value="PROTEIN TRICHOME BIREFRINGENCE-LIKE 28"/>
    <property type="match status" value="1"/>
</dbReference>
<dbReference type="PANTHER" id="PTHR32285">
    <property type="entry name" value="PROTEIN TRICHOME BIREFRINGENCE-LIKE 9-RELATED"/>
    <property type="match status" value="1"/>
</dbReference>
<dbReference type="Pfam" id="PF13839">
    <property type="entry name" value="PC-Esterase"/>
    <property type="match status" value="1"/>
</dbReference>
<dbReference type="Pfam" id="PF14416">
    <property type="entry name" value="PMR5N"/>
    <property type="match status" value="1"/>
</dbReference>
<sequence length="424" mass="49404">MQPSRTRVSFFETGETMKQRKKSYLSIFVIFFSLFFFGIFMYNDNLKSSIADFTSSNPFSSSFVELPPDECDLFTGQWVFDNKTYPLYKEEECEFLTEQVTCLRNGRKDSLFQNWRWQPRDCSLPKFNARVLLEKLRNKRLMFVGDSLNRNQWESMVCLVQSVIPPGRKSLNQTGSLTVFKIQDYNATVEFYWAPFLVESNSDDPEKHSIIDRIIMPESIEKHGVNWIGVDFLVFNSYIWWMNTVSIKVLRGSFDDGDTEYDEIKRPIAYERVLRTLGDWVDHNIDPLSTTVFFMSMSPLHIKSSDWANPEGIRCALETTPILNMSFNVAYGQFSAVGTDYRLFPVAENVTQSLKVPIHFLNITALSEYRKDAHTSVYTIKQGKLLTREQQNDPANFADCIHWCLPGLPDTWNEFLYTHIISRR</sequence>
<proteinExistence type="evidence at transcript level"/>
<protein>
    <recommendedName>
        <fullName>Protein trichome birefringence-like 28</fullName>
    </recommendedName>
</protein>
<keyword id="KW-0472">Membrane</keyword>
<keyword id="KW-1185">Reference proteome</keyword>
<keyword id="KW-0735">Signal-anchor</keyword>
<keyword id="KW-0812">Transmembrane</keyword>
<keyword id="KW-1133">Transmembrane helix</keyword>
<name>TBL28_ARATH</name>
<comment type="function">
    <text evidence="1 2">May act as a bridging protein that binds pectin and other cell wall polysaccharides. Probably involved in maintaining esterification of pectins (By similarity). May be involved in the specific O-acetylation of cell wall polymers (By similarity).</text>
</comment>
<comment type="subcellular location">
    <subcellularLocation>
        <location evidence="4">Membrane</location>
        <topology evidence="4">Single-pass type II membrane protein</topology>
    </subcellularLocation>
</comment>
<comment type="miscellaneous">
    <text evidence="5">Contains 2 motifs that are conserved in esterases, but it is unlikely that this protein belongs to the catalytically active pectin esterases.</text>
</comment>
<comment type="similarity">
    <text evidence="4">Belongs to the PC-esterase family. TBL subfamily.</text>
</comment>
<comment type="sequence caution" evidence="4">
    <conflict type="erroneous gene model prediction">
        <sequence resource="EMBL-CDS" id="AAD25931"/>
    </conflict>
</comment>
<feature type="chain" id="PRO_0000425393" description="Protein trichome birefringence-like 28">
    <location>
        <begin position="1"/>
        <end position="424"/>
    </location>
</feature>
<feature type="transmembrane region" description="Helical; Signal-anchor for type II membrane protein" evidence="3">
    <location>
        <begin position="23"/>
        <end position="43"/>
    </location>
</feature>
<feature type="short sequence motif" description="GDS motif">
    <location>
        <begin position="145"/>
        <end position="147"/>
    </location>
</feature>
<feature type="short sequence motif" description="DCXHWCLPGXXDXWN motif">
    <location>
        <begin position="399"/>
        <end position="413"/>
    </location>
</feature>
<evidence type="ECO:0000250" key="1">
    <source>
        <dbReference type="UniProtKB" id="Q9FG35"/>
    </source>
</evidence>
<evidence type="ECO:0000250" key="2">
    <source>
        <dbReference type="UniProtKB" id="Q9LY46"/>
    </source>
</evidence>
<evidence type="ECO:0000255" key="3"/>
<evidence type="ECO:0000305" key="4"/>
<evidence type="ECO:0000305" key="5">
    <source>
    </source>
</evidence>
<organism>
    <name type="scientific">Arabidopsis thaliana</name>
    <name type="common">Mouse-ear cress</name>
    <dbReference type="NCBI Taxonomy" id="3702"/>
    <lineage>
        <taxon>Eukaryota</taxon>
        <taxon>Viridiplantae</taxon>
        <taxon>Streptophyta</taxon>
        <taxon>Embryophyta</taxon>
        <taxon>Tracheophyta</taxon>
        <taxon>Spermatophyta</taxon>
        <taxon>Magnoliopsida</taxon>
        <taxon>eudicotyledons</taxon>
        <taxon>Gunneridae</taxon>
        <taxon>Pentapetalae</taxon>
        <taxon>rosids</taxon>
        <taxon>malvids</taxon>
        <taxon>Brassicales</taxon>
        <taxon>Brassicaceae</taxon>
        <taxon>Camelineae</taxon>
        <taxon>Arabidopsis</taxon>
    </lineage>
</organism>
<reference key="1">
    <citation type="journal article" date="1999" name="Genome Res.">
        <title>A cluster of ABA-regulated genes on Arabidopsis thaliana BAC T07M07.</title>
        <authorList>
            <person name="Wang M.L."/>
            <person name="Belmonte S."/>
            <person name="Kim U."/>
            <person name="Dolan M."/>
            <person name="Morris J.W."/>
            <person name="Goodman H.M."/>
        </authorList>
    </citation>
    <scope>NUCLEOTIDE SEQUENCE [GENOMIC DNA]</scope>
</reference>
<reference key="2">
    <citation type="journal article" date="1999" name="Nature">
        <title>Sequence and analysis of chromosome 2 of the plant Arabidopsis thaliana.</title>
        <authorList>
            <person name="Lin X."/>
            <person name="Kaul S."/>
            <person name="Rounsley S.D."/>
            <person name="Shea T.P."/>
            <person name="Benito M.-I."/>
            <person name="Town C.D."/>
            <person name="Fujii C.Y."/>
            <person name="Mason T.M."/>
            <person name="Bowman C.L."/>
            <person name="Barnstead M.E."/>
            <person name="Feldblyum T.V."/>
            <person name="Buell C.R."/>
            <person name="Ketchum K.A."/>
            <person name="Lee J.J."/>
            <person name="Ronning C.M."/>
            <person name="Koo H.L."/>
            <person name="Moffat K.S."/>
            <person name="Cronin L.A."/>
            <person name="Shen M."/>
            <person name="Pai G."/>
            <person name="Van Aken S."/>
            <person name="Umayam L."/>
            <person name="Tallon L.J."/>
            <person name="Gill J.E."/>
            <person name="Adams M.D."/>
            <person name="Carrera A.J."/>
            <person name="Creasy T.H."/>
            <person name="Goodman H.M."/>
            <person name="Somerville C.R."/>
            <person name="Copenhaver G.P."/>
            <person name="Preuss D."/>
            <person name="Nierman W.C."/>
            <person name="White O."/>
            <person name="Eisen J.A."/>
            <person name="Salzberg S.L."/>
            <person name="Fraser C.M."/>
            <person name="Venter J.C."/>
        </authorList>
    </citation>
    <scope>NUCLEOTIDE SEQUENCE [LARGE SCALE GENOMIC DNA]</scope>
    <source>
        <strain>cv. Columbia</strain>
    </source>
</reference>
<reference key="3">
    <citation type="journal article" date="2017" name="Plant J.">
        <title>Araport11: a complete reannotation of the Arabidopsis thaliana reference genome.</title>
        <authorList>
            <person name="Cheng C.Y."/>
            <person name="Krishnakumar V."/>
            <person name="Chan A.P."/>
            <person name="Thibaud-Nissen F."/>
            <person name="Schobel S."/>
            <person name="Town C.D."/>
        </authorList>
    </citation>
    <scope>GENOME REANNOTATION</scope>
    <source>
        <strain>cv. Columbia</strain>
    </source>
</reference>
<reference key="4">
    <citation type="journal article" date="2003" name="Science">
        <title>Empirical analysis of transcriptional activity in the Arabidopsis genome.</title>
        <authorList>
            <person name="Yamada K."/>
            <person name="Lim J."/>
            <person name="Dale J.M."/>
            <person name="Chen H."/>
            <person name="Shinn P."/>
            <person name="Palm C.J."/>
            <person name="Southwick A.M."/>
            <person name="Wu H.C."/>
            <person name="Kim C.J."/>
            <person name="Nguyen M."/>
            <person name="Pham P.K."/>
            <person name="Cheuk R.F."/>
            <person name="Karlin-Newmann G."/>
            <person name="Liu S.X."/>
            <person name="Lam B."/>
            <person name="Sakano H."/>
            <person name="Wu T."/>
            <person name="Yu G."/>
            <person name="Miranda M."/>
            <person name="Quach H.L."/>
            <person name="Tripp M."/>
            <person name="Chang C.H."/>
            <person name="Lee J.M."/>
            <person name="Toriumi M.J."/>
            <person name="Chan M.M."/>
            <person name="Tang C.C."/>
            <person name="Onodera C.S."/>
            <person name="Deng J.M."/>
            <person name="Akiyama K."/>
            <person name="Ansari Y."/>
            <person name="Arakawa T."/>
            <person name="Banh J."/>
            <person name="Banno F."/>
            <person name="Bowser L."/>
            <person name="Brooks S.Y."/>
            <person name="Carninci P."/>
            <person name="Chao Q."/>
            <person name="Choy N."/>
            <person name="Enju A."/>
            <person name="Goldsmith A.D."/>
            <person name="Gurjal M."/>
            <person name="Hansen N.F."/>
            <person name="Hayashizaki Y."/>
            <person name="Johnson-Hopson C."/>
            <person name="Hsuan V.W."/>
            <person name="Iida K."/>
            <person name="Karnes M."/>
            <person name="Khan S."/>
            <person name="Koesema E."/>
            <person name="Ishida J."/>
            <person name="Jiang P.X."/>
            <person name="Jones T."/>
            <person name="Kawai J."/>
            <person name="Kamiya A."/>
            <person name="Meyers C."/>
            <person name="Nakajima M."/>
            <person name="Narusaka M."/>
            <person name="Seki M."/>
            <person name="Sakurai T."/>
            <person name="Satou M."/>
            <person name="Tamse R."/>
            <person name="Vaysberg M."/>
            <person name="Wallender E.K."/>
            <person name="Wong C."/>
            <person name="Yamamura Y."/>
            <person name="Yuan S."/>
            <person name="Shinozaki K."/>
            <person name="Davis R.W."/>
            <person name="Theologis A."/>
            <person name="Ecker J.R."/>
        </authorList>
    </citation>
    <scope>NUCLEOTIDE SEQUENCE [LARGE SCALE MRNA]</scope>
    <source>
        <strain>cv. Columbia</strain>
    </source>
</reference>
<reference key="5">
    <citation type="journal article" date="2007" name="Plant J.">
        <title>Arabidopsis ESK1 encodes a novel regulator of freezing tolerance.</title>
        <authorList>
            <person name="Xin Z."/>
            <person name="Mandaokar A."/>
            <person name="Chen J."/>
            <person name="Last R.L."/>
            <person name="Browse J."/>
        </authorList>
    </citation>
    <scope>GENE FAMILY</scope>
    <source>
        <strain>cv. Columbia</strain>
    </source>
</reference>
<reference key="6">
    <citation type="journal article" date="2010" name="Plant Physiol.">
        <title>TRICHOME BIREFRINGENCE and its homolog AT5G01360 encode plant-specific DUF231 proteins required for cellulose biosynthesis in Arabidopsis.</title>
        <authorList>
            <person name="Bischoff V."/>
            <person name="Nita S."/>
            <person name="Neumetzler L."/>
            <person name="Schindelasch D."/>
            <person name="Urbain A."/>
            <person name="Eshed R."/>
            <person name="Persson S."/>
            <person name="Delmer D."/>
            <person name="Scheible W.R."/>
        </authorList>
    </citation>
    <scope>GENE FAMILY</scope>
    <scope>NOMENCLATURE</scope>
</reference>
<reference key="7">
    <citation type="journal article" date="2010" name="Plant Signal. Behav.">
        <title>Involvement of TBL/DUF231 proteins into cell wall biology.</title>
        <authorList>
            <person name="Bischoff V."/>
            <person name="Selbig J."/>
            <person name="Scheible W.R."/>
        </authorList>
    </citation>
    <scope>3D-STRUCTURE MODELING</scope>
</reference>
<gene>
    <name type="primary">TBL28</name>
    <name type="ordered locus">At2g40150</name>
    <name type="ORF">T7M7.4</name>
</gene>
<accession>Q94K00</accession>
<accession>Q9XEE7</accession>